<reference key="1">
    <citation type="journal article" date="1999" name="J. Mol. Evol.">
        <title>The plastid genome of the cryptophyte alga, Guillardia theta: complete sequence and conserved synteny groups confirm its common ancestry with red algae.</title>
        <authorList>
            <person name="Douglas S.E."/>
            <person name="Penny S.L."/>
        </authorList>
    </citation>
    <scope>NUCLEOTIDE SEQUENCE [LARGE SCALE GENOMIC DNA]</scope>
</reference>
<keyword id="KW-0067">ATP-binding</keyword>
<keyword id="KW-0150">Chloroplast</keyword>
<keyword id="KW-0547">Nucleotide-binding</keyword>
<keyword id="KW-0934">Plastid</keyword>
<sequence>MNNFELILLYYGKKIFMSFVKDFKLLLKARYPIIYINTYEEERVEYVIKSAIQSFTNRAVYSWDFIEGYCNNPNDNGYAIRNPLQALEFIDKFTLETPLLVLLKDFHLFLNDISVSRKLRNLAKSLRNQSKTIVIIASDLTIPLNLSDSITILHFPLPKNSEIKKELLRIQESLGYSLPEHSLDNLVKASQGLSLEKIRRVLAKIIATYKEINVESLDLVFKEKQQLISQTQILEFYNPVTKISDIGGLNELKSWLKFRAASFSKRAEEYGLPIPKGLLLVGIQGTGKSLTAKSIANEWNLPLLKLDVGRLFGGIIGESEARVRQMIQFAETISPCILWIDEIDKAFTGSNFNNDSGTTKRVFGTFITWLSEKKSPVFVVATANNIDSLPPELLRKGRFDEVFFIGLPDLKERECIFKVHLKKIRPKSWSTYDTEILSAQSNRFSGAEIEESIYEAMHIAFNENREFTTSDILNSLKRVVPLAYTSQKNIEELEDWASAGKIRLAS</sequence>
<name>YCF46_GUITH</name>
<accession>O78439</accession>
<geneLocation type="chloroplast"/>
<gene>
    <name type="primary">ycf46</name>
</gene>
<proteinExistence type="inferred from homology"/>
<evidence type="ECO:0000255" key="1"/>
<evidence type="ECO:0000305" key="2"/>
<dbReference type="EMBL" id="AF041468">
    <property type="protein sequence ID" value="AAC35624.1"/>
    <property type="molecule type" value="Genomic_DNA"/>
</dbReference>
<dbReference type="RefSeq" id="NP_050690.1">
    <property type="nucleotide sequence ID" value="NC_000926.1"/>
</dbReference>
<dbReference type="SMR" id="O78439"/>
<dbReference type="GeneID" id="856982"/>
<dbReference type="HOGENOM" id="CLU_023673_0_0_1"/>
<dbReference type="OMA" id="EAMHIGF"/>
<dbReference type="GO" id="GO:0009507">
    <property type="term" value="C:chloroplast"/>
    <property type="evidence" value="ECO:0007669"/>
    <property type="project" value="UniProtKB-SubCell"/>
</dbReference>
<dbReference type="GO" id="GO:0005524">
    <property type="term" value="F:ATP binding"/>
    <property type="evidence" value="ECO:0007669"/>
    <property type="project" value="UniProtKB-KW"/>
</dbReference>
<dbReference type="GO" id="GO:0016887">
    <property type="term" value="F:ATP hydrolysis activity"/>
    <property type="evidence" value="ECO:0007669"/>
    <property type="project" value="InterPro"/>
</dbReference>
<dbReference type="CDD" id="cd19507">
    <property type="entry name" value="RecA-like_Ycf46-like"/>
    <property type="match status" value="1"/>
</dbReference>
<dbReference type="Gene3D" id="1.10.8.60">
    <property type="match status" value="1"/>
</dbReference>
<dbReference type="Gene3D" id="3.40.50.300">
    <property type="entry name" value="P-loop containing nucleotide triphosphate hydrolases"/>
    <property type="match status" value="1"/>
</dbReference>
<dbReference type="InterPro" id="IPR003593">
    <property type="entry name" value="AAA+_ATPase"/>
</dbReference>
<dbReference type="InterPro" id="IPR052381">
    <property type="entry name" value="AAA_domain_protein"/>
</dbReference>
<dbReference type="InterPro" id="IPR003959">
    <property type="entry name" value="ATPase_AAA_core"/>
</dbReference>
<dbReference type="InterPro" id="IPR027417">
    <property type="entry name" value="P-loop_NTPase"/>
</dbReference>
<dbReference type="PANTHER" id="PTHR42960">
    <property type="entry name" value="YCF46 PROTEIN"/>
    <property type="match status" value="1"/>
</dbReference>
<dbReference type="PANTHER" id="PTHR42960:SF1">
    <property type="entry name" value="YCF46 PROTEIN"/>
    <property type="match status" value="1"/>
</dbReference>
<dbReference type="Pfam" id="PF00004">
    <property type="entry name" value="AAA"/>
    <property type="match status" value="1"/>
</dbReference>
<dbReference type="SMART" id="SM00382">
    <property type="entry name" value="AAA"/>
    <property type="match status" value="1"/>
</dbReference>
<dbReference type="SUPFAM" id="SSF52540">
    <property type="entry name" value="P-loop containing nucleoside triphosphate hydrolases"/>
    <property type="match status" value="2"/>
</dbReference>
<feature type="chain" id="PRO_0000084802" description="Uncharacterized AAA domain-containing protein ycf46">
    <location>
        <begin position="1"/>
        <end position="506"/>
    </location>
</feature>
<feature type="binding site" evidence="1">
    <location>
        <begin position="282"/>
        <end position="289"/>
    </location>
    <ligand>
        <name>ATP</name>
        <dbReference type="ChEBI" id="CHEBI:30616"/>
    </ligand>
</feature>
<organism>
    <name type="scientific">Guillardia theta</name>
    <name type="common">Cryptophyte</name>
    <name type="synonym">Cryptomonas phi</name>
    <dbReference type="NCBI Taxonomy" id="55529"/>
    <lineage>
        <taxon>Eukaryota</taxon>
        <taxon>Cryptophyceae</taxon>
        <taxon>Pyrenomonadales</taxon>
        <taxon>Geminigeraceae</taxon>
        <taxon>Guillardia</taxon>
    </lineage>
</organism>
<comment type="subcellular location">
    <subcellularLocation>
        <location>Plastid</location>
        <location>Chloroplast</location>
    </subcellularLocation>
</comment>
<comment type="similarity">
    <text evidence="2">Belongs to the AAA ATPase family. Highly divergent.</text>
</comment>
<protein>
    <recommendedName>
        <fullName>Uncharacterized AAA domain-containing protein ycf46</fullName>
    </recommendedName>
</protein>